<keyword id="KW-0687">Ribonucleoprotein</keyword>
<keyword id="KW-0689">Ribosomal protein</keyword>
<keyword id="KW-0694">RNA-binding</keyword>
<keyword id="KW-0699">rRNA-binding</keyword>
<gene>
    <name evidence="1" type="primary">rpl4</name>
    <name type="ordered locus">Mbar_A0109</name>
</gene>
<accession>Q46G96</accession>
<sequence>MATAKTIDLTGKVVREIELPDVFDVDYRPDLIKKAVLAAQANRLQPYGPRLYAGMETSARGWGSGRGTSHVPRLVNSSRAARVPHARGGRRAHPPKPEADRSEKVNTKERRYAIRSAIAATRDPTLVSLRGHIFEAELPIVTENALEDLDKTKQVIEFLQAIGVYEDVLRAKYGRHIRAGRGKLRGRKYKHKKSVLIVAGESAPILKAARNLSGVDVATVDSLNAELLAPGTHAGRLTIWTESAVEKLEGAFQ</sequence>
<proteinExistence type="inferred from homology"/>
<name>RL4_METBF</name>
<evidence type="ECO:0000255" key="1">
    <source>
        <dbReference type="HAMAP-Rule" id="MF_01328"/>
    </source>
</evidence>
<evidence type="ECO:0000256" key="2">
    <source>
        <dbReference type="SAM" id="MobiDB-lite"/>
    </source>
</evidence>
<evidence type="ECO:0000305" key="3"/>
<reference key="1">
    <citation type="journal article" date="2006" name="J. Bacteriol.">
        <title>The Methanosarcina barkeri genome: comparative analysis with Methanosarcina acetivorans and Methanosarcina mazei reveals extensive rearrangement within methanosarcinal genomes.</title>
        <authorList>
            <person name="Maeder D.L."/>
            <person name="Anderson I."/>
            <person name="Brettin T.S."/>
            <person name="Bruce D.C."/>
            <person name="Gilna P."/>
            <person name="Han C.S."/>
            <person name="Lapidus A."/>
            <person name="Metcalf W.W."/>
            <person name="Saunders E."/>
            <person name="Tapia R."/>
            <person name="Sowers K.R."/>
        </authorList>
    </citation>
    <scope>NUCLEOTIDE SEQUENCE [LARGE SCALE GENOMIC DNA]</scope>
    <source>
        <strain>Fusaro / DSM 804</strain>
    </source>
</reference>
<organism>
    <name type="scientific">Methanosarcina barkeri (strain Fusaro / DSM 804)</name>
    <dbReference type="NCBI Taxonomy" id="269797"/>
    <lineage>
        <taxon>Archaea</taxon>
        <taxon>Methanobacteriati</taxon>
        <taxon>Methanobacteriota</taxon>
        <taxon>Stenosarchaea group</taxon>
        <taxon>Methanomicrobia</taxon>
        <taxon>Methanosarcinales</taxon>
        <taxon>Methanosarcinaceae</taxon>
        <taxon>Methanosarcina</taxon>
    </lineage>
</organism>
<comment type="function">
    <text evidence="1">One of the primary rRNA binding proteins, this protein initially binds near the 5'-end of the 23S rRNA. It is important during the early stages of 50S assembly. It makes multiple contacts with different domains of the 23S rRNA in the assembled 50S subunit and ribosome.</text>
</comment>
<comment type="function">
    <text evidence="1">Forms part of the polypeptide exit tunnel.</text>
</comment>
<comment type="subunit">
    <text evidence="1">Part of the 50S ribosomal subunit.</text>
</comment>
<comment type="similarity">
    <text evidence="1">Belongs to the universal ribosomal protein uL4 family.</text>
</comment>
<dbReference type="EMBL" id="CP000099">
    <property type="protein sequence ID" value="AAZ69096.1"/>
    <property type="molecule type" value="Genomic_DNA"/>
</dbReference>
<dbReference type="SMR" id="Q46G96"/>
<dbReference type="STRING" id="269797.Mbar_A0109"/>
<dbReference type="PaxDb" id="269797-Mbar_A0109"/>
<dbReference type="KEGG" id="mba:Mbar_A0109"/>
<dbReference type="eggNOG" id="arCOG04071">
    <property type="taxonomic scope" value="Archaea"/>
</dbReference>
<dbReference type="HOGENOM" id="CLU_026535_0_0_2"/>
<dbReference type="OrthoDB" id="10737at2157"/>
<dbReference type="GO" id="GO:1990904">
    <property type="term" value="C:ribonucleoprotein complex"/>
    <property type="evidence" value="ECO:0007669"/>
    <property type="project" value="UniProtKB-KW"/>
</dbReference>
<dbReference type="GO" id="GO:0005840">
    <property type="term" value="C:ribosome"/>
    <property type="evidence" value="ECO:0007669"/>
    <property type="project" value="UniProtKB-KW"/>
</dbReference>
<dbReference type="GO" id="GO:0019843">
    <property type="term" value="F:rRNA binding"/>
    <property type="evidence" value="ECO:0007669"/>
    <property type="project" value="UniProtKB-UniRule"/>
</dbReference>
<dbReference type="GO" id="GO:0003735">
    <property type="term" value="F:structural constituent of ribosome"/>
    <property type="evidence" value="ECO:0007669"/>
    <property type="project" value="InterPro"/>
</dbReference>
<dbReference type="GO" id="GO:0006412">
    <property type="term" value="P:translation"/>
    <property type="evidence" value="ECO:0007669"/>
    <property type="project" value="UniProtKB-UniRule"/>
</dbReference>
<dbReference type="FunFam" id="3.40.1370.10:FF:000011">
    <property type="entry name" value="50S ribosomal protein L4"/>
    <property type="match status" value="1"/>
</dbReference>
<dbReference type="Gene3D" id="3.40.1370.10">
    <property type="match status" value="1"/>
</dbReference>
<dbReference type="HAMAP" id="MF_01328_A">
    <property type="entry name" value="Ribosomal_uL4_A"/>
    <property type="match status" value="1"/>
</dbReference>
<dbReference type="InterPro" id="IPR002136">
    <property type="entry name" value="Ribosomal_uL4"/>
</dbReference>
<dbReference type="InterPro" id="IPR023574">
    <property type="entry name" value="Ribosomal_uL4_dom_sf"/>
</dbReference>
<dbReference type="InterPro" id="IPR045240">
    <property type="entry name" value="Ribosomal_uL4_euk/arch"/>
</dbReference>
<dbReference type="InterPro" id="IPR019970">
    <property type="entry name" value="Ribosomall_uL4-arc"/>
</dbReference>
<dbReference type="NCBIfam" id="TIGR03672">
    <property type="entry name" value="rpl4p_arch"/>
    <property type="match status" value="1"/>
</dbReference>
<dbReference type="PANTHER" id="PTHR19431">
    <property type="entry name" value="60S RIBOSOMAL PROTEIN L4"/>
    <property type="match status" value="1"/>
</dbReference>
<dbReference type="Pfam" id="PF00573">
    <property type="entry name" value="Ribosomal_L4"/>
    <property type="match status" value="1"/>
</dbReference>
<dbReference type="SUPFAM" id="SSF52166">
    <property type="entry name" value="Ribosomal protein L4"/>
    <property type="match status" value="1"/>
</dbReference>
<feature type="chain" id="PRO_0000242467" description="Large ribosomal subunit protein uL4">
    <location>
        <begin position="1"/>
        <end position="253"/>
    </location>
</feature>
<feature type="region of interest" description="Disordered" evidence="2">
    <location>
        <begin position="61"/>
        <end position="107"/>
    </location>
</feature>
<feature type="compositionally biased region" description="Basic residues" evidence="2">
    <location>
        <begin position="82"/>
        <end position="94"/>
    </location>
</feature>
<feature type="compositionally biased region" description="Basic and acidic residues" evidence="2">
    <location>
        <begin position="95"/>
        <end position="107"/>
    </location>
</feature>
<protein>
    <recommendedName>
        <fullName evidence="1">Large ribosomal subunit protein uL4</fullName>
    </recommendedName>
    <alternativeName>
        <fullName evidence="3">50S ribosomal protein L4</fullName>
    </alternativeName>
</protein>